<sequence>MKKIILVAGGTGGHFFPAVALGEELIKRGYEVHFITDLRCKQYIKQDMKVIFHILDLKRSGNIFLFLPRLSIAVLKAIKLLYNMKPSVTVGFGGYPVIAPMFAAIFLRVPIIIHEQNSYLGKVNKFFASFAKKIAISYEKIKNLPEFAKSKIVVTGGVVRENIRELKVIEMSSRGLTTGSKKSLIKALDSVVKPRNDKLFTIFIFGGSQGAKLFSELIPASIQILMQKQPSLELNIIQQAALDDQVKIKDIYSKLNITYEFAEFFDNMALQYKEADLVISRAGASTIEELTYIGLPAIFIPLPSAADNHQYYNAQLLEDEKTGWCLEQNNISAGKLADKILDLISNPKILEDASQNLLKRRKEGHKLLSNLIEEVI</sequence>
<protein>
    <recommendedName>
        <fullName evidence="1">UDP-N-acetylglucosamine--N-acetylmuramyl-(pentapeptide) pyrophosphoryl-undecaprenol N-acetylglucosamine transferase</fullName>
        <ecNumber evidence="1">2.4.1.227</ecNumber>
    </recommendedName>
    <alternativeName>
        <fullName evidence="1">Undecaprenyl-PP-MurNAc-pentapeptide-UDPGlcNAc GlcNAc transferase</fullName>
    </alternativeName>
</protein>
<organism>
    <name type="scientific">Rickettsia peacockii (strain Rustic)</name>
    <dbReference type="NCBI Taxonomy" id="562019"/>
    <lineage>
        <taxon>Bacteria</taxon>
        <taxon>Pseudomonadati</taxon>
        <taxon>Pseudomonadota</taxon>
        <taxon>Alphaproteobacteria</taxon>
        <taxon>Rickettsiales</taxon>
        <taxon>Rickettsiaceae</taxon>
        <taxon>Rickettsieae</taxon>
        <taxon>Rickettsia</taxon>
        <taxon>spotted fever group</taxon>
    </lineage>
</organism>
<feature type="chain" id="PRO_1000202029" description="UDP-N-acetylglucosamine--N-acetylmuramyl-(pentapeptide) pyrophosphoryl-undecaprenol N-acetylglucosamine transferase">
    <location>
        <begin position="1"/>
        <end position="376"/>
    </location>
</feature>
<feature type="binding site" evidence="1">
    <location>
        <begin position="11"/>
        <end position="13"/>
    </location>
    <ligand>
        <name>UDP-N-acetyl-alpha-D-glucosamine</name>
        <dbReference type="ChEBI" id="CHEBI:57705"/>
    </ligand>
</feature>
<feature type="binding site" evidence="1">
    <location>
        <position position="117"/>
    </location>
    <ligand>
        <name>UDP-N-acetyl-alpha-D-glucosamine</name>
        <dbReference type="ChEBI" id="CHEBI:57705"/>
    </ligand>
</feature>
<feature type="binding site" evidence="1">
    <location>
        <position position="160"/>
    </location>
    <ligand>
        <name>UDP-N-acetyl-alpha-D-glucosamine</name>
        <dbReference type="ChEBI" id="CHEBI:57705"/>
    </ligand>
</feature>
<feature type="binding site" evidence="1">
    <location>
        <position position="208"/>
    </location>
    <ligand>
        <name>UDP-N-acetyl-alpha-D-glucosamine</name>
        <dbReference type="ChEBI" id="CHEBI:57705"/>
    </ligand>
</feature>
<feature type="binding site" evidence="1">
    <location>
        <position position="310"/>
    </location>
    <ligand>
        <name>UDP-N-acetyl-alpha-D-glucosamine</name>
        <dbReference type="ChEBI" id="CHEBI:57705"/>
    </ligand>
</feature>
<reference key="1">
    <citation type="journal article" date="2009" name="PLoS ONE">
        <title>Genome sequence of the endosymbiont Rickettsia peacockii and comparison with virulent Rickettsia rickettsii: identification of virulence factors.</title>
        <authorList>
            <person name="Felsheim R.F."/>
            <person name="Kurtti T.J."/>
            <person name="Munderloh U.G."/>
        </authorList>
    </citation>
    <scope>NUCLEOTIDE SEQUENCE [LARGE SCALE GENOMIC DNA]</scope>
    <source>
        <strain>Rustic</strain>
    </source>
</reference>
<keyword id="KW-0131">Cell cycle</keyword>
<keyword id="KW-0132">Cell division</keyword>
<keyword id="KW-0997">Cell inner membrane</keyword>
<keyword id="KW-1003">Cell membrane</keyword>
<keyword id="KW-0133">Cell shape</keyword>
<keyword id="KW-0961">Cell wall biogenesis/degradation</keyword>
<keyword id="KW-0328">Glycosyltransferase</keyword>
<keyword id="KW-0472">Membrane</keyword>
<keyword id="KW-0573">Peptidoglycan synthesis</keyword>
<keyword id="KW-0808">Transferase</keyword>
<name>MURG_RICPU</name>
<comment type="function">
    <text evidence="1">Cell wall formation. Catalyzes the transfer of a GlcNAc subunit on undecaprenyl-pyrophosphoryl-MurNAc-pentapeptide (lipid intermediate I) to form undecaprenyl-pyrophosphoryl-MurNAc-(pentapeptide)GlcNAc (lipid intermediate II).</text>
</comment>
<comment type="catalytic activity">
    <reaction evidence="1">
        <text>di-trans,octa-cis-undecaprenyl diphospho-N-acetyl-alpha-D-muramoyl-L-alanyl-D-glutamyl-meso-2,6-diaminopimeloyl-D-alanyl-D-alanine + UDP-N-acetyl-alpha-D-glucosamine = di-trans,octa-cis-undecaprenyl diphospho-[N-acetyl-alpha-D-glucosaminyl-(1-&gt;4)]-N-acetyl-alpha-D-muramoyl-L-alanyl-D-glutamyl-meso-2,6-diaminopimeloyl-D-alanyl-D-alanine + UDP + H(+)</text>
        <dbReference type="Rhea" id="RHEA:31227"/>
        <dbReference type="ChEBI" id="CHEBI:15378"/>
        <dbReference type="ChEBI" id="CHEBI:57705"/>
        <dbReference type="ChEBI" id="CHEBI:58223"/>
        <dbReference type="ChEBI" id="CHEBI:61387"/>
        <dbReference type="ChEBI" id="CHEBI:61388"/>
        <dbReference type="EC" id="2.4.1.227"/>
    </reaction>
</comment>
<comment type="pathway">
    <text evidence="1">Cell wall biogenesis; peptidoglycan biosynthesis.</text>
</comment>
<comment type="subcellular location">
    <subcellularLocation>
        <location evidence="1">Cell inner membrane</location>
        <topology evidence="1">Peripheral membrane protein</topology>
        <orientation evidence="1">Cytoplasmic side</orientation>
    </subcellularLocation>
</comment>
<comment type="similarity">
    <text evidence="1">Belongs to the glycosyltransferase 28 family. MurG subfamily.</text>
</comment>
<accession>C4K2A6</accession>
<evidence type="ECO:0000255" key="1">
    <source>
        <dbReference type="HAMAP-Rule" id="MF_00033"/>
    </source>
</evidence>
<proteinExistence type="inferred from homology"/>
<gene>
    <name evidence="1" type="primary">murG</name>
    <name type="ordered locus">RPR_05715</name>
</gene>
<dbReference type="EC" id="2.4.1.227" evidence="1"/>
<dbReference type="EMBL" id="CP001227">
    <property type="protein sequence ID" value="ACR47703.1"/>
    <property type="molecule type" value="Genomic_DNA"/>
</dbReference>
<dbReference type="RefSeq" id="WP_012736897.1">
    <property type="nucleotide sequence ID" value="NC_012730.1"/>
</dbReference>
<dbReference type="SMR" id="C4K2A6"/>
<dbReference type="CAZy" id="GT28">
    <property type="family name" value="Glycosyltransferase Family 28"/>
</dbReference>
<dbReference type="KEGG" id="rpk:RPR_05715"/>
<dbReference type="HOGENOM" id="CLU_037404_2_1_5"/>
<dbReference type="UniPathway" id="UPA00219"/>
<dbReference type="Proteomes" id="UP000005015">
    <property type="component" value="Chromosome"/>
</dbReference>
<dbReference type="GO" id="GO:0005886">
    <property type="term" value="C:plasma membrane"/>
    <property type="evidence" value="ECO:0007669"/>
    <property type="project" value="UniProtKB-SubCell"/>
</dbReference>
<dbReference type="GO" id="GO:0051991">
    <property type="term" value="F:UDP-N-acetyl-D-glucosamine:N-acetylmuramoyl-L-alanyl-D-glutamyl-meso-2,6-diaminopimelyl-D-alanyl-D-alanine-diphosphoundecaprenol 4-beta-N-acetylglucosaminlytransferase activity"/>
    <property type="evidence" value="ECO:0007669"/>
    <property type="project" value="RHEA"/>
</dbReference>
<dbReference type="GO" id="GO:0050511">
    <property type="term" value="F:undecaprenyldiphospho-muramoylpentapeptide beta-N-acetylglucosaminyltransferase activity"/>
    <property type="evidence" value="ECO:0007669"/>
    <property type="project" value="UniProtKB-UniRule"/>
</dbReference>
<dbReference type="GO" id="GO:0005975">
    <property type="term" value="P:carbohydrate metabolic process"/>
    <property type="evidence" value="ECO:0007669"/>
    <property type="project" value="InterPro"/>
</dbReference>
<dbReference type="GO" id="GO:0051301">
    <property type="term" value="P:cell division"/>
    <property type="evidence" value="ECO:0007669"/>
    <property type="project" value="UniProtKB-KW"/>
</dbReference>
<dbReference type="GO" id="GO:0071555">
    <property type="term" value="P:cell wall organization"/>
    <property type="evidence" value="ECO:0007669"/>
    <property type="project" value="UniProtKB-KW"/>
</dbReference>
<dbReference type="GO" id="GO:0030259">
    <property type="term" value="P:lipid glycosylation"/>
    <property type="evidence" value="ECO:0007669"/>
    <property type="project" value="UniProtKB-UniRule"/>
</dbReference>
<dbReference type="GO" id="GO:0009252">
    <property type="term" value="P:peptidoglycan biosynthetic process"/>
    <property type="evidence" value="ECO:0007669"/>
    <property type="project" value="UniProtKB-UniRule"/>
</dbReference>
<dbReference type="GO" id="GO:0008360">
    <property type="term" value="P:regulation of cell shape"/>
    <property type="evidence" value="ECO:0007669"/>
    <property type="project" value="UniProtKB-KW"/>
</dbReference>
<dbReference type="CDD" id="cd03785">
    <property type="entry name" value="GT28_MurG"/>
    <property type="match status" value="1"/>
</dbReference>
<dbReference type="Gene3D" id="3.40.50.2000">
    <property type="entry name" value="Glycogen Phosphorylase B"/>
    <property type="match status" value="2"/>
</dbReference>
<dbReference type="HAMAP" id="MF_00033">
    <property type="entry name" value="MurG"/>
    <property type="match status" value="1"/>
</dbReference>
<dbReference type="InterPro" id="IPR006009">
    <property type="entry name" value="GlcNAc_MurG"/>
</dbReference>
<dbReference type="InterPro" id="IPR007235">
    <property type="entry name" value="Glyco_trans_28_C"/>
</dbReference>
<dbReference type="InterPro" id="IPR004276">
    <property type="entry name" value="GlycoTrans_28_N"/>
</dbReference>
<dbReference type="InterPro" id="IPR022439">
    <property type="entry name" value="RPE4"/>
</dbReference>
<dbReference type="NCBIfam" id="TIGR01133">
    <property type="entry name" value="murG"/>
    <property type="match status" value="1"/>
</dbReference>
<dbReference type="NCBIfam" id="TIGR03777">
    <property type="entry name" value="RPE4"/>
    <property type="match status" value="1"/>
</dbReference>
<dbReference type="PANTHER" id="PTHR21015:SF22">
    <property type="entry name" value="GLYCOSYLTRANSFERASE"/>
    <property type="match status" value="1"/>
</dbReference>
<dbReference type="PANTHER" id="PTHR21015">
    <property type="entry name" value="UDP-N-ACETYLGLUCOSAMINE--N-ACETYLMURAMYL-(PENTAPEPTIDE) PYROPHOSPHORYL-UNDECAPRENOL N-ACETYLGLUCOSAMINE TRANSFERASE 1"/>
    <property type="match status" value="1"/>
</dbReference>
<dbReference type="Pfam" id="PF04101">
    <property type="entry name" value="Glyco_tran_28_C"/>
    <property type="match status" value="1"/>
</dbReference>
<dbReference type="Pfam" id="PF03033">
    <property type="entry name" value="Glyco_transf_28"/>
    <property type="match status" value="1"/>
</dbReference>
<dbReference type="SUPFAM" id="SSF53756">
    <property type="entry name" value="UDP-Glycosyltransferase/glycogen phosphorylase"/>
    <property type="match status" value="1"/>
</dbReference>